<keyword id="KW-0539">Nucleus</keyword>
<keyword id="KW-1185">Reference proteome</keyword>
<dbReference type="EMBL" id="CU329670">
    <property type="protein sequence ID" value="CAA93906.2"/>
    <property type="molecule type" value="Genomic_DNA"/>
</dbReference>
<dbReference type="EMBL" id="AB027908">
    <property type="protein sequence ID" value="BAA87212.1"/>
    <property type="molecule type" value="Genomic_DNA"/>
</dbReference>
<dbReference type="PIR" id="T38176">
    <property type="entry name" value="T38176"/>
</dbReference>
<dbReference type="RefSeq" id="NP_594845.2">
    <property type="nucleotide sequence ID" value="NM_001020274.2"/>
</dbReference>
<dbReference type="SMR" id="Q10369"/>
<dbReference type="BioGRID" id="278283">
    <property type="interactions" value="11"/>
</dbReference>
<dbReference type="STRING" id="284812.Q10369"/>
<dbReference type="iPTMnet" id="Q10369"/>
<dbReference type="PaxDb" id="4896-SPAC22E12.19.1"/>
<dbReference type="EnsemblFungi" id="SPAC22E12.19.1">
    <property type="protein sequence ID" value="SPAC22E12.19.1:pep"/>
    <property type="gene ID" value="SPAC22E12.19"/>
</dbReference>
<dbReference type="GeneID" id="2541792"/>
<dbReference type="KEGG" id="spo:2541792"/>
<dbReference type="PomBase" id="SPAC22E12.19"/>
<dbReference type="VEuPathDB" id="FungiDB:SPAC22E12.19"/>
<dbReference type="eggNOG" id="KOG1878">
    <property type="taxonomic scope" value="Eukaryota"/>
</dbReference>
<dbReference type="HOGENOM" id="CLU_415128_0_0_1"/>
<dbReference type="InParanoid" id="Q10369"/>
<dbReference type="OMA" id="QHSIFVQ"/>
<dbReference type="PRO" id="PR:Q10369"/>
<dbReference type="Proteomes" id="UP000002485">
    <property type="component" value="Chromosome I"/>
</dbReference>
<dbReference type="GO" id="GO:0005634">
    <property type="term" value="C:nucleus"/>
    <property type="evidence" value="ECO:0000314"/>
    <property type="project" value="PomBase"/>
</dbReference>
<dbReference type="GO" id="GO:0070210">
    <property type="term" value="C:Rpd3L-Expanded complex"/>
    <property type="evidence" value="ECO:0000314"/>
    <property type="project" value="PomBase"/>
</dbReference>
<dbReference type="GO" id="GO:0034967">
    <property type="term" value="C:Set3 complex"/>
    <property type="evidence" value="ECO:0000314"/>
    <property type="project" value="PomBase"/>
</dbReference>
<dbReference type="GO" id="GO:0003677">
    <property type="term" value="F:DNA binding"/>
    <property type="evidence" value="ECO:0000255"/>
    <property type="project" value="PomBase"/>
</dbReference>
<dbReference type="GO" id="GO:0045892">
    <property type="term" value="P:negative regulation of DNA-templated transcription"/>
    <property type="evidence" value="ECO:0007669"/>
    <property type="project" value="GOC"/>
</dbReference>
<dbReference type="GO" id="GO:0045814">
    <property type="term" value="P:negative regulation of gene expression, epigenetic"/>
    <property type="evidence" value="ECO:0000305"/>
    <property type="project" value="PomBase"/>
</dbReference>
<dbReference type="CDD" id="cd00167">
    <property type="entry name" value="SANT"/>
    <property type="match status" value="1"/>
</dbReference>
<dbReference type="Gene3D" id="1.10.10.60">
    <property type="entry name" value="Homeodomain-like"/>
    <property type="match status" value="1"/>
</dbReference>
<dbReference type="InterPro" id="IPR009057">
    <property type="entry name" value="Homeodomain-like_sf"/>
</dbReference>
<dbReference type="InterPro" id="IPR051571">
    <property type="entry name" value="N-CoR_corepressor"/>
</dbReference>
<dbReference type="InterPro" id="IPR001005">
    <property type="entry name" value="SANT/Myb"/>
</dbReference>
<dbReference type="InterPro" id="IPR017884">
    <property type="entry name" value="SANT_dom"/>
</dbReference>
<dbReference type="PANTHER" id="PTHR13992">
    <property type="entry name" value="NUCLEAR RECEPTOR CO-REPRESSOR RELATED NCOR"/>
    <property type="match status" value="1"/>
</dbReference>
<dbReference type="PANTHER" id="PTHR13992:SF39">
    <property type="entry name" value="SMRTER, ISOFORM G"/>
    <property type="match status" value="1"/>
</dbReference>
<dbReference type="Pfam" id="PF00249">
    <property type="entry name" value="Myb_DNA-binding"/>
    <property type="match status" value="1"/>
</dbReference>
<dbReference type="SMART" id="SM00717">
    <property type="entry name" value="SANT"/>
    <property type="match status" value="1"/>
</dbReference>
<dbReference type="SUPFAM" id="SSF46689">
    <property type="entry name" value="Homeodomain-like"/>
    <property type="match status" value="1"/>
</dbReference>
<dbReference type="PROSITE" id="PS51293">
    <property type="entry name" value="SANT"/>
    <property type="match status" value="1"/>
</dbReference>
<gene>
    <name type="ORF">SPAC22E12.19</name>
    <name type="ORF">SPAC2E12.01</name>
</gene>
<reference key="1">
    <citation type="journal article" date="2002" name="Nature">
        <title>The genome sequence of Schizosaccharomyces pombe.</title>
        <authorList>
            <person name="Wood V."/>
            <person name="Gwilliam R."/>
            <person name="Rajandream M.A."/>
            <person name="Lyne M.H."/>
            <person name="Lyne R."/>
            <person name="Stewart A."/>
            <person name="Sgouros J.G."/>
            <person name="Peat N."/>
            <person name="Hayles J."/>
            <person name="Baker S.G."/>
            <person name="Basham D."/>
            <person name="Bowman S."/>
            <person name="Brooks K."/>
            <person name="Brown D."/>
            <person name="Brown S."/>
            <person name="Chillingworth T."/>
            <person name="Churcher C.M."/>
            <person name="Collins M."/>
            <person name="Connor R."/>
            <person name="Cronin A."/>
            <person name="Davis P."/>
            <person name="Feltwell T."/>
            <person name="Fraser A."/>
            <person name="Gentles S."/>
            <person name="Goble A."/>
            <person name="Hamlin N."/>
            <person name="Harris D.E."/>
            <person name="Hidalgo J."/>
            <person name="Hodgson G."/>
            <person name="Holroyd S."/>
            <person name="Hornsby T."/>
            <person name="Howarth S."/>
            <person name="Huckle E.J."/>
            <person name="Hunt S."/>
            <person name="Jagels K."/>
            <person name="James K.D."/>
            <person name="Jones L."/>
            <person name="Jones M."/>
            <person name="Leather S."/>
            <person name="McDonald S."/>
            <person name="McLean J."/>
            <person name="Mooney P."/>
            <person name="Moule S."/>
            <person name="Mungall K.L."/>
            <person name="Murphy L.D."/>
            <person name="Niblett D."/>
            <person name="Odell C."/>
            <person name="Oliver K."/>
            <person name="O'Neil S."/>
            <person name="Pearson D."/>
            <person name="Quail M.A."/>
            <person name="Rabbinowitsch E."/>
            <person name="Rutherford K.M."/>
            <person name="Rutter S."/>
            <person name="Saunders D."/>
            <person name="Seeger K."/>
            <person name="Sharp S."/>
            <person name="Skelton J."/>
            <person name="Simmonds M.N."/>
            <person name="Squares R."/>
            <person name="Squares S."/>
            <person name="Stevens K."/>
            <person name="Taylor K."/>
            <person name="Taylor R.G."/>
            <person name="Tivey A."/>
            <person name="Walsh S.V."/>
            <person name="Warren T."/>
            <person name="Whitehead S."/>
            <person name="Woodward J.R."/>
            <person name="Volckaert G."/>
            <person name="Aert R."/>
            <person name="Robben J."/>
            <person name="Grymonprez B."/>
            <person name="Weltjens I."/>
            <person name="Vanstreels E."/>
            <person name="Rieger M."/>
            <person name="Schaefer M."/>
            <person name="Mueller-Auer S."/>
            <person name="Gabel C."/>
            <person name="Fuchs M."/>
            <person name="Duesterhoeft A."/>
            <person name="Fritzc C."/>
            <person name="Holzer E."/>
            <person name="Moestl D."/>
            <person name="Hilbert H."/>
            <person name="Borzym K."/>
            <person name="Langer I."/>
            <person name="Beck A."/>
            <person name="Lehrach H."/>
            <person name="Reinhardt R."/>
            <person name="Pohl T.M."/>
            <person name="Eger P."/>
            <person name="Zimmermann W."/>
            <person name="Wedler H."/>
            <person name="Wambutt R."/>
            <person name="Purnelle B."/>
            <person name="Goffeau A."/>
            <person name="Cadieu E."/>
            <person name="Dreano S."/>
            <person name="Gloux S."/>
            <person name="Lelaure V."/>
            <person name="Mottier S."/>
            <person name="Galibert F."/>
            <person name="Aves S.J."/>
            <person name="Xiang Z."/>
            <person name="Hunt C."/>
            <person name="Moore K."/>
            <person name="Hurst S.M."/>
            <person name="Lucas M."/>
            <person name="Rochet M."/>
            <person name="Gaillardin C."/>
            <person name="Tallada V.A."/>
            <person name="Garzon A."/>
            <person name="Thode G."/>
            <person name="Daga R.R."/>
            <person name="Cruzado L."/>
            <person name="Jimenez J."/>
            <person name="Sanchez M."/>
            <person name="del Rey F."/>
            <person name="Benito J."/>
            <person name="Dominguez A."/>
            <person name="Revuelta J.L."/>
            <person name="Moreno S."/>
            <person name="Armstrong J."/>
            <person name="Forsburg S.L."/>
            <person name="Cerutti L."/>
            <person name="Lowe T."/>
            <person name="McCombie W.R."/>
            <person name="Paulsen I."/>
            <person name="Potashkin J."/>
            <person name="Shpakovski G.V."/>
            <person name="Ussery D."/>
            <person name="Barrell B.G."/>
            <person name="Nurse P."/>
        </authorList>
    </citation>
    <scope>NUCLEOTIDE SEQUENCE [LARGE SCALE GENOMIC DNA]</scope>
    <source>
        <strain>972 / ATCC 24843</strain>
    </source>
</reference>
<reference key="2">
    <citation type="journal article" date="2000" name="Genes Cells">
        <title>Large-scale screening of intracellular protein localization in living fission yeast cells by the use of a GFP-fusion genomic DNA library.</title>
        <authorList>
            <person name="Ding D.-Q."/>
            <person name="Tomita Y."/>
            <person name="Yamamoto A."/>
            <person name="Chikashige Y."/>
            <person name="Haraguchi T."/>
            <person name="Hiraoka Y."/>
        </authorList>
    </citation>
    <scope>NUCLEOTIDE SEQUENCE [LARGE SCALE GENOMIC DNA] OF 161-331</scope>
    <scope>SUBCELLULAR LOCATION</scope>
    <source>
        <strain>ATCC 38364 / 968</strain>
    </source>
</reference>
<reference key="3">
    <citation type="journal article" date="2006" name="Nat. Biotechnol.">
        <title>ORFeome cloning and global analysis of protein localization in the fission yeast Schizosaccharomyces pombe.</title>
        <authorList>
            <person name="Matsuyama A."/>
            <person name="Arai R."/>
            <person name="Yashiroda Y."/>
            <person name="Shirai A."/>
            <person name="Kamata A."/>
            <person name="Sekido S."/>
            <person name="Kobayashi Y."/>
            <person name="Hashimoto A."/>
            <person name="Hamamoto M."/>
            <person name="Hiraoka Y."/>
            <person name="Horinouchi S."/>
            <person name="Yoshida M."/>
        </authorList>
    </citation>
    <scope>SUBCELLULAR LOCATION [LARGE SCALE ANALYSIS]</scope>
</reference>
<feature type="chain" id="PRO_0000116608" description="Uncharacterized protein C22E12.19">
    <location>
        <begin position="1"/>
        <end position="661"/>
    </location>
</feature>
<feature type="domain" description="SANT" evidence="1">
    <location>
        <begin position="246"/>
        <end position="297"/>
    </location>
</feature>
<feature type="region of interest" description="Disordered" evidence="2">
    <location>
        <begin position="25"/>
        <end position="52"/>
    </location>
</feature>
<feature type="region of interest" description="Disordered" evidence="2">
    <location>
        <begin position="306"/>
        <end position="329"/>
    </location>
</feature>
<feature type="region of interest" description="Disordered" evidence="2">
    <location>
        <begin position="478"/>
        <end position="499"/>
    </location>
</feature>
<feature type="region of interest" description="Disordered" evidence="2">
    <location>
        <begin position="548"/>
        <end position="570"/>
    </location>
</feature>
<feature type="region of interest" description="Disordered" evidence="2">
    <location>
        <begin position="604"/>
        <end position="633"/>
    </location>
</feature>
<feature type="compositionally biased region" description="Polar residues" evidence="2">
    <location>
        <begin position="42"/>
        <end position="52"/>
    </location>
</feature>
<feature type="compositionally biased region" description="Basic residues" evidence="2">
    <location>
        <begin position="308"/>
        <end position="328"/>
    </location>
</feature>
<feature type="compositionally biased region" description="Basic and acidic residues" evidence="2">
    <location>
        <begin position="478"/>
        <end position="487"/>
    </location>
</feature>
<feature type="compositionally biased region" description="Basic and acidic residues" evidence="2">
    <location>
        <begin position="604"/>
        <end position="617"/>
    </location>
</feature>
<sequence length="661" mass="75097">MDLTTPEVAEHPDVLRNMSRYTLGLLPSEPPVGDMNNEDSDTNTSITQSPTNSEKLTDILQESQDTKALQEKYLQNIYALTQNQLFKNVEDYSFYNLNREKFQRDKQTIVGVMRKRRHVLNKKIKRLQSHWKQVLGRWEENIARVDRLTEIDKTKNAKKSEPFIKRSTRKVMSNFTAGDIVRSEEEFLEILAKLEQQEKEASNVSEASRIATIPPMILSEEEVKSQYFNDQSRLVTDCPKFYHFQSMPDIWNEEQHSIFVQQFILHGKKFGKIAEAVPGKNSKECVLHYYLTKRTTDYRALVASATKTKGRRRKKLLPSQRGGKKKSKGSALMVDIEAADINKTEENINNQFQEASVTADNMNTWDNTPSVENVESANENVNNHNADEQMDEKIKSLVEGNSAYEIEKGAQEPDPMSIDMTDKSETVSGFKHDVDVYDTAENEGNNTLLQIKESVHEKTPTQDEPMDISQDTIKQEDYYEPKLEQHSSSKRNSISTRKEEDAASALANLSAVGRSISAVDESAHQGHLPGWDEKEEALIFSLAQGMNPMKMPLTPRRASTGPRPRPTFQLTEIDSPNRRRASDCITPSISKILKMVSEDAKSQRIDELSVEDQEHTTHSSHTTSDINAFPNSQSFPRASIHTLAALGEDIVERQSKNDKIV</sequence>
<name>YDBJ_SCHPO</name>
<accession>Q10369</accession>
<accession>Q10226</accession>
<accession>Q9USA7</accession>
<protein>
    <recommendedName>
        <fullName>Uncharacterized protein C22E12.19</fullName>
    </recommendedName>
</protein>
<comment type="subcellular location">
    <subcellularLocation>
        <location evidence="1 3 4">Nucleus</location>
    </subcellularLocation>
</comment>
<proteinExistence type="inferred from homology"/>
<organism>
    <name type="scientific">Schizosaccharomyces pombe (strain 972 / ATCC 24843)</name>
    <name type="common">Fission yeast</name>
    <dbReference type="NCBI Taxonomy" id="284812"/>
    <lineage>
        <taxon>Eukaryota</taxon>
        <taxon>Fungi</taxon>
        <taxon>Dikarya</taxon>
        <taxon>Ascomycota</taxon>
        <taxon>Taphrinomycotina</taxon>
        <taxon>Schizosaccharomycetes</taxon>
        <taxon>Schizosaccharomycetales</taxon>
        <taxon>Schizosaccharomycetaceae</taxon>
        <taxon>Schizosaccharomyces</taxon>
    </lineage>
</organism>
<evidence type="ECO:0000255" key="1">
    <source>
        <dbReference type="PROSITE-ProRule" id="PRU00624"/>
    </source>
</evidence>
<evidence type="ECO:0000256" key="2">
    <source>
        <dbReference type="SAM" id="MobiDB-lite"/>
    </source>
</evidence>
<evidence type="ECO:0000269" key="3">
    <source>
    </source>
</evidence>
<evidence type="ECO:0000269" key="4">
    <source>
    </source>
</evidence>